<gene>
    <name type="ordered locus">EUBREC_1565</name>
</gene>
<comment type="subunit">
    <text evidence="1">Homodimer.</text>
</comment>
<comment type="similarity">
    <text evidence="1">Belongs to the UPF0210 family.</text>
</comment>
<protein>
    <recommendedName>
        <fullName evidence="1">UPF0210 protein EUBREC_1565</fullName>
    </recommendedName>
</protein>
<reference key="1">
    <citation type="journal article" date="2009" name="Proc. Natl. Acad. Sci. U.S.A.">
        <title>Characterizing a model human gut microbiota composed of members of its two dominant bacterial phyla.</title>
        <authorList>
            <person name="Mahowald M.A."/>
            <person name="Rey F.E."/>
            <person name="Seedorf H."/>
            <person name="Turnbaugh P.J."/>
            <person name="Fulton R.S."/>
            <person name="Wollam A."/>
            <person name="Shah N."/>
            <person name="Wang C."/>
            <person name="Magrini V."/>
            <person name="Wilson R.K."/>
            <person name="Cantarel B.L."/>
            <person name="Coutinho P.M."/>
            <person name="Henrissat B."/>
            <person name="Crock L.W."/>
            <person name="Russell A."/>
            <person name="Verberkmoes N.C."/>
            <person name="Hettich R.L."/>
            <person name="Gordon J.I."/>
        </authorList>
    </citation>
    <scope>NUCLEOTIDE SEQUENCE [LARGE SCALE GENOMIC DNA]</scope>
    <source>
        <strain>ATCC 33656 / DSM 3377 / JCM 17463 / KCTC 5835 / LMG 30912 / VPI 0990</strain>
    </source>
</reference>
<feature type="chain" id="PRO_1000213963" description="UPF0210 protein EUBREC_1565">
    <location>
        <begin position="1"/>
        <end position="454"/>
    </location>
</feature>
<dbReference type="EMBL" id="CP001107">
    <property type="protein sequence ID" value="ACR75309.1"/>
    <property type="molecule type" value="Genomic_DNA"/>
</dbReference>
<dbReference type="RefSeq" id="WP_012742408.1">
    <property type="nucleotide sequence ID" value="NZ_CAXSYD010000012.1"/>
</dbReference>
<dbReference type="SMR" id="C4Z987"/>
<dbReference type="STRING" id="515619.EUBREC_1565"/>
<dbReference type="PaxDb" id="515619-EUBREC_1565"/>
<dbReference type="KEGG" id="ere:EUBREC_1565"/>
<dbReference type="HOGENOM" id="CLU_048704_0_0_9"/>
<dbReference type="Proteomes" id="UP000001477">
    <property type="component" value="Chromosome"/>
</dbReference>
<dbReference type="CDD" id="cd08025">
    <property type="entry name" value="RNR_PFL_like_DUF711"/>
    <property type="match status" value="1"/>
</dbReference>
<dbReference type="Gene3D" id="3.20.70.20">
    <property type="match status" value="1"/>
</dbReference>
<dbReference type="HAMAP" id="MF_01221">
    <property type="entry name" value="UPF0210"/>
    <property type="match status" value="1"/>
</dbReference>
<dbReference type="InterPro" id="IPR007841">
    <property type="entry name" value="UPF0210"/>
</dbReference>
<dbReference type="NCBIfam" id="NF003700">
    <property type="entry name" value="PRK05313.1"/>
    <property type="match status" value="1"/>
</dbReference>
<dbReference type="PANTHER" id="PTHR37560:SF1">
    <property type="entry name" value="UPF0210 PROTEIN MJ1665"/>
    <property type="match status" value="1"/>
</dbReference>
<dbReference type="PANTHER" id="PTHR37560">
    <property type="entry name" value="UPF0210 PROTEIN SPR0218"/>
    <property type="match status" value="1"/>
</dbReference>
<dbReference type="Pfam" id="PF05167">
    <property type="entry name" value="DUF711"/>
    <property type="match status" value="1"/>
</dbReference>
<dbReference type="SUPFAM" id="SSF51998">
    <property type="entry name" value="PFL-like glycyl radical enzymes"/>
    <property type="match status" value="1"/>
</dbReference>
<sequence>MINIGEVIETNDMVEKENLDVRTITLGISLLDCIDSDLAKVNENIYNKITTLAKNLVSTGKEIENNYCIPIVNKRISVTPIALVGGAACKSSEDFVTIAKTLDRAAKEVGVNFIGGYSALVSKGMTKADELLIKSIPQAMLETDLVCSSVNVGSTKTGINMDAVKLIGEMIKETAEVTKHLPVSGCAKFVVFCNAPDDNPFMAGAFHGVTEADAIINVGVSGPGVVKTALEKVRGENFEVLCETIKKTAFKVTRVGQLVAKEASKKLGVPFGIIDLSLAPTPAIGDSVADILCEIGLERAGAPGTTAALALLNDQVKKGGIMASSYVGGLSGAFIPVSEDQGMIDAVNDGALTLEKLEAMTCVCSVGLDMIAIPGDTKATTISGIIADEMAIGMINQKTTACRLLPAIGKDVGDVVEIGGLLGSAPVMPVNRFSCDAFVNRGGRIPAPIHSFKN</sequence>
<evidence type="ECO:0000255" key="1">
    <source>
        <dbReference type="HAMAP-Rule" id="MF_01221"/>
    </source>
</evidence>
<organism>
    <name type="scientific">Agathobacter rectalis (strain ATCC 33656 / DSM 3377 / JCM 17463 / KCTC 5835 / VPI 0990)</name>
    <name type="common">Eubacterium rectale</name>
    <dbReference type="NCBI Taxonomy" id="515619"/>
    <lineage>
        <taxon>Bacteria</taxon>
        <taxon>Bacillati</taxon>
        <taxon>Bacillota</taxon>
        <taxon>Clostridia</taxon>
        <taxon>Lachnospirales</taxon>
        <taxon>Lachnospiraceae</taxon>
        <taxon>Agathobacter</taxon>
    </lineage>
</organism>
<name>Y1565_AGARV</name>
<accession>C4Z987</accession>
<proteinExistence type="inferred from homology"/>